<name>DRE2A_ORYSI</name>
<feature type="chain" id="PRO_0000323029" description="Dehydration-responsive element-binding protein 2A">
    <location>
        <begin position="1"/>
        <end position="274"/>
    </location>
</feature>
<feature type="DNA-binding region" description="AP2/ERF" evidence="2">
    <location>
        <begin position="75"/>
        <end position="132"/>
    </location>
</feature>
<feature type="region of interest" description="Disordered" evidence="3">
    <location>
        <begin position="1"/>
        <end position="75"/>
    </location>
</feature>
<feature type="compositionally biased region" description="Basic and acidic residues" evidence="3">
    <location>
        <begin position="1"/>
        <end position="10"/>
    </location>
</feature>
<feature type="compositionally biased region" description="Basic and acidic residues" evidence="3">
    <location>
        <begin position="35"/>
        <end position="50"/>
    </location>
</feature>
<reference key="1">
    <citation type="journal article" date="2005" name="PLoS Biol.">
        <title>The genomes of Oryza sativa: a history of duplications.</title>
        <authorList>
            <person name="Yu J."/>
            <person name="Wang J."/>
            <person name="Lin W."/>
            <person name="Li S."/>
            <person name="Li H."/>
            <person name="Zhou J."/>
            <person name="Ni P."/>
            <person name="Dong W."/>
            <person name="Hu S."/>
            <person name="Zeng C."/>
            <person name="Zhang J."/>
            <person name="Zhang Y."/>
            <person name="Li R."/>
            <person name="Xu Z."/>
            <person name="Li S."/>
            <person name="Li X."/>
            <person name="Zheng H."/>
            <person name="Cong L."/>
            <person name="Lin L."/>
            <person name="Yin J."/>
            <person name="Geng J."/>
            <person name="Li G."/>
            <person name="Shi J."/>
            <person name="Liu J."/>
            <person name="Lv H."/>
            <person name="Li J."/>
            <person name="Wang J."/>
            <person name="Deng Y."/>
            <person name="Ran L."/>
            <person name="Shi X."/>
            <person name="Wang X."/>
            <person name="Wu Q."/>
            <person name="Li C."/>
            <person name="Ren X."/>
            <person name="Wang J."/>
            <person name="Wang X."/>
            <person name="Li D."/>
            <person name="Liu D."/>
            <person name="Zhang X."/>
            <person name="Ji Z."/>
            <person name="Zhao W."/>
            <person name="Sun Y."/>
            <person name="Zhang Z."/>
            <person name="Bao J."/>
            <person name="Han Y."/>
            <person name="Dong L."/>
            <person name="Ji J."/>
            <person name="Chen P."/>
            <person name="Wu S."/>
            <person name="Liu J."/>
            <person name="Xiao Y."/>
            <person name="Bu D."/>
            <person name="Tan J."/>
            <person name="Yang L."/>
            <person name="Ye C."/>
            <person name="Zhang J."/>
            <person name="Xu J."/>
            <person name="Zhou Y."/>
            <person name="Yu Y."/>
            <person name="Zhang B."/>
            <person name="Zhuang S."/>
            <person name="Wei H."/>
            <person name="Liu B."/>
            <person name="Lei M."/>
            <person name="Yu H."/>
            <person name="Li Y."/>
            <person name="Xu H."/>
            <person name="Wei S."/>
            <person name="He X."/>
            <person name="Fang L."/>
            <person name="Zhang Z."/>
            <person name="Zhang Y."/>
            <person name="Huang X."/>
            <person name="Su Z."/>
            <person name="Tong W."/>
            <person name="Li J."/>
            <person name="Tong Z."/>
            <person name="Li S."/>
            <person name="Ye J."/>
            <person name="Wang L."/>
            <person name="Fang L."/>
            <person name="Lei T."/>
            <person name="Chen C.-S."/>
            <person name="Chen H.-C."/>
            <person name="Xu Z."/>
            <person name="Li H."/>
            <person name="Huang H."/>
            <person name="Zhang F."/>
            <person name="Xu H."/>
            <person name="Li N."/>
            <person name="Zhao C."/>
            <person name="Li S."/>
            <person name="Dong L."/>
            <person name="Huang Y."/>
            <person name="Li L."/>
            <person name="Xi Y."/>
            <person name="Qi Q."/>
            <person name="Li W."/>
            <person name="Zhang B."/>
            <person name="Hu W."/>
            <person name="Zhang Y."/>
            <person name="Tian X."/>
            <person name="Jiao Y."/>
            <person name="Liang X."/>
            <person name="Jin J."/>
            <person name="Gao L."/>
            <person name="Zheng W."/>
            <person name="Hao B."/>
            <person name="Liu S.-M."/>
            <person name="Wang W."/>
            <person name="Yuan L."/>
            <person name="Cao M."/>
            <person name="McDermott J."/>
            <person name="Samudrala R."/>
            <person name="Wang J."/>
            <person name="Wong G.K.-S."/>
            <person name="Yang H."/>
        </authorList>
    </citation>
    <scope>NUCLEOTIDE SEQUENCE [LARGE SCALE GENOMIC DNA]</scope>
    <source>
        <strain>cv. 93-11</strain>
    </source>
</reference>
<proteinExistence type="inferred from homology"/>
<sequence>MERGEGRRGDCSVQVRKKRTRRKSDGPDSIAETIKWWKEQNQKLQEENSSRKAPAKGSKKGCMAGKGGPENSNCAYRGVRQRTWGKWVAEIREPNRGRRLWLGSFPTALEAAHAYDEAARAMYGPTARVNFADNSTDANSGCTSAPSLMMSNGPATIPSDEKDELESPPFIVANGPAVLYQPDKKDVLERVVPEVQDVKTEGSNGLKRVCQERKTMEVCESEGIVLHKEVNISYDYFNVHEVVEMIIVELSADQKTEVHEEYQEGDDGFSLFSY</sequence>
<dbReference type="EMBL" id="CM000126">
    <property type="protein sequence ID" value="EAY72665.1"/>
    <property type="status" value="ALT_SEQ"/>
    <property type="molecule type" value="Genomic_DNA"/>
</dbReference>
<dbReference type="SMR" id="A2WL19"/>
<dbReference type="STRING" id="39946.A2WL19"/>
<dbReference type="EnsemblPlants" id="OsGoSa_01g0004530.01">
    <property type="protein sequence ID" value="OsGoSa_01g0004530.01"/>
    <property type="gene ID" value="OsGoSa_01g0004530"/>
</dbReference>
<dbReference type="EnsemblPlants" id="OsIR64_01g0004460.01">
    <property type="protein sequence ID" value="OsIR64_01g0004460.01"/>
    <property type="gene ID" value="OsIR64_01g0004460"/>
</dbReference>
<dbReference type="EnsemblPlants" id="OsKYG_01g0004470.01">
    <property type="protein sequence ID" value="OsKYG_01g0004470.01"/>
    <property type="gene ID" value="OsKYG_01g0004470"/>
</dbReference>
<dbReference type="EnsemblPlants" id="OsLaMu_01g0004430.01">
    <property type="protein sequence ID" value="OsLaMu_01g0004430.01"/>
    <property type="gene ID" value="OsLaMu_01g0004430"/>
</dbReference>
<dbReference type="EnsemblPlants" id="OsLima_01g0004310.01">
    <property type="protein sequence ID" value="OsLima_01g0004310.01"/>
    <property type="gene ID" value="OsLima_01g0004310"/>
</dbReference>
<dbReference type="EnsemblPlants" id="OsLiXu_01g0004500.01">
    <property type="protein sequence ID" value="OsLiXu_01g0004500.01"/>
    <property type="gene ID" value="OsLiXu_01g0004500"/>
</dbReference>
<dbReference type="EnsemblPlants" id="OsMH63_01G004710_01">
    <property type="protein sequence ID" value="OsMH63_01G004710_01"/>
    <property type="gene ID" value="OsMH63_01G004710"/>
</dbReference>
<dbReference type="EnsemblPlants" id="OsPr106_01g0004540.01">
    <property type="protein sequence ID" value="OsPr106_01g0004540.01"/>
    <property type="gene ID" value="OsPr106_01g0004540"/>
</dbReference>
<dbReference type="EnsemblPlants" id="OsZS97_01G004340_01">
    <property type="protein sequence ID" value="OsZS97_01G004340_01"/>
    <property type="gene ID" value="OsZS97_01G004340"/>
</dbReference>
<dbReference type="EnsemblPlants" id="OsZS97_01G004340_02">
    <property type="protein sequence ID" value="OsZS97_01G004340_02"/>
    <property type="gene ID" value="OsZS97_01G004340"/>
</dbReference>
<dbReference type="Gramene" id="OsGoSa_01g0004530.01">
    <property type="protein sequence ID" value="OsGoSa_01g0004530.01"/>
    <property type="gene ID" value="OsGoSa_01g0004530"/>
</dbReference>
<dbReference type="Gramene" id="OsIR64_01g0004460.01">
    <property type="protein sequence ID" value="OsIR64_01g0004460.01"/>
    <property type="gene ID" value="OsIR64_01g0004460"/>
</dbReference>
<dbReference type="Gramene" id="OsKYG_01g0004470.01">
    <property type="protein sequence ID" value="OsKYG_01g0004470.01"/>
    <property type="gene ID" value="OsKYG_01g0004470"/>
</dbReference>
<dbReference type="Gramene" id="OsLaMu_01g0004430.01">
    <property type="protein sequence ID" value="OsLaMu_01g0004430.01"/>
    <property type="gene ID" value="OsLaMu_01g0004430"/>
</dbReference>
<dbReference type="Gramene" id="OsLima_01g0004310.01">
    <property type="protein sequence ID" value="OsLima_01g0004310.01"/>
    <property type="gene ID" value="OsLima_01g0004310"/>
</dbReference>
<dbReference type="Gramene" id="OsLiXu_01g0004500.01">
    <property type="protein sequence ID" value="OsLiXu_01g0004500.01"/>
    <property type="gene ID" value="OsLiXu_01g0004500"/>
</dbReference>
<dbReference type="Gramene" id="OsMH63_01G004710_01">
    <property type="protein sequence ID" value="OsMH63_01G004710_01"/>
    <property type="gene ID" value="OsMH63_01G004710"/>
</dbReference>
<dbReference type="Gramene" id="OsPr106_01g0004540.01">
    <property type="protein sequence ID" value="OsPr106_01g0004540.01"/>
    <property type="gene ID" value="OsPr106_01g0004540"/>
</dbReference>
<dbReference type="Gramene" id="OsZS97_01G004340_01">
    <property type="protein sequence ID" value="OsZS97_01G004340_01"/>
    <property type="gene ID" value="OsZS97_01G004340"/>
</dbReference>
<dbReference type="Gramene" id="OsZS97_01G004340_02">
    <property type="protein sequence ID" value="OsZS97_01G004340_02"/>
    <property type="gene ID" value="OsZS97_01G004340"/>
</dbReference>
<dbReference type="HOGENOM" id="CLU_046486_2_0_1"/>
<dbReference type="OrthoDB" id="550883at2759"/>
<dbReference type="Proteomes" id="UP000007015">
    <property type="component" value="Chromosome 1"/>
</dbReference>
<dbReference type="GO" id="GO:0005634">
    <property type="term" value="C:nucleus"/>
    <property type="evidence" value="ECO:0007669"/>
    <property type="project" value="UniProtKB-SubCell"/>
</dbReference>
<dbReference type="GO" id="GO:0003700">
    <property type="term" value="F:DNA-binding transcription factor activity"/>
    <property type="evidence" value="ECO:0007669"/>
    <property type="project" value="InterPro"/>
</dbReference>
<dbReference type="GO" id="GO:0000976">
    <property type="term" value="F:transcription cis-regulatory region binding"/>
    <property type="evidence" value="ECO:0007669"/>
    <property type="project" value="TreeGrafter"/>
</dbReference>
<dbReference type="GO" id="GO:0045893">
    <property type="term" value="P:positive regulation of DNA-templated transcription"/>
    <property type="evidence" value="ECO:0007669"/>
    <property type="project" value="TreeGrafter"/>
</dbReference>
<dbReference type="GO" id="GO:0006950">
    <property type="term" value="P:response to stress"/>
    <property type="evidence" value="ECO:0007669"/>
    <property type="project" value="TreeGrafter"/>
</dbReference>
<dbReference type="CDD" id="cd00018">
    <property type="entry name" value="AP2"/>
    <property type="match status" value="1"/>
</dbReference>
<dbReference type="FunFam" id="3.30.730.10:FF:000001">
    <property type="entry name" value="Ethylene-responsive transcription factor 2"/>
    <property type="match status" value="1"/>
</dbReference>
<dbReference type="Gene3D" id="3.30.730.10">
    <property type="entry name" value="AP2/ERF domain"/>
    <property type="match status" value="1"/>
</dbReference>
<dbReference type="InterPro" id="IPR001471">
    <property type="entry name" value="AP2/ERF_dom"/>
</dbReference>
<dbReference type="InterPro" id="IPR036955">
    <property type="entry name" value="AP2/ERF_dom_sf"/>
</dbReference>
<dbReference type="InterPro" id="IPR016177">
    <property type="entry name" value="DNA-bd_dom_sf"/>
</dbReference>
<dbReference type="PANTHER" id="PTHR31241">
    <property type="entry name" value="DEHYDRATION-RESPONSIVE ELEMENT-BINDING PROTEIN 2C"/>
    <property type="match status" value="1"/>
</dbReference>
<dbReference type="PANTHER" id="PTHR31241:SF62">
    <property type="entry name" value="DEHYDRATION-RESPONSIVE ELEMENT-BINDING PROTEIN 2D"/>
    <property type="match status" value="1"/>
</dbReference>
<dbReference type="Pfam" id="PF00847">
    <property type="entry name" value="AP2"/>
    <property type="match status" value="1"/>
</dbReference>
<dbReference type="PRINTS" id="PR00367">
    <property type="entry name" value="ETHRSPELEMNT"/>
</dbReference>
<dbReference type="SMART" id="SM00380">
    <property type="entry name" value="AP2"/>
    <property type="match status" value="1"/>
</dbReference>
<dbReference type="SUPFAM" id="SSF54171">
    <property type="entry name" value="DNA-binding domain"/>
    <property type="match status" value="1"/>
</dbReference>
<dbReference type="PROSITE" id="PS51032">
    <property type="entry name" value="AP2_ERF"/>
    <property type="match status" value="1"/>
</dbReference>
<gene>
    <name type="primary">DREB2A</name>
    <name type="synonym">ERF40</name>
    <name type="ORF">OsI_000512</name>
</gene>
<comment type="function">
    <text evidence="1">Transcriptional activator that binds specifically to the DNA sequence 5'-[AG]CCGAC-3'. Binding to the C-repeat/DRE element mediates high salinity- and dehydration-inducible transcription (By similarity).</text>
</comment>
<comment type="subcellular location">
    <subcellularLocation>
        <location evidence="4">Nucleus</location>
    </subcellularLocation>
</comment>
<comment type="similarity">
    <text evidence="4">Belongs to the AP2/ERF transcription factor family. ERF subfamily.</text>
</comment>
<comment type="sequence caution" evidence="4">
    <conflict type="erroneous gene model prediction">
        <sequence resource="EMBL-CDS" id="EAY72665"/>
    </conflict>
</comment>
<keyword id="KW-0010">Activator</keyword>
<keyword id="KW-0238">DNA-binding</keyword>
<keyword id="KW-0539">Nucleus</keyword>
<keyword id="KW-1185">Reference proteome</keyword>
<keyword id="KW-0346">Stress response</keyword>
<keyword id="KW-0804">Transcription</keyword>
<keyword id="KW-0805">Transcription regulation</keyword>
<organism>
    <name type="scientific">Oryza sativa subsp. indica</name>
    <name type="common">Rice</name>
    <dbReference type="NCBI Taxonomy" id="39946"/>
    <lineage>
        <taxon>Eukaryota</taxon>
        <taxon>Viridiplantae</taxon>
        <taxon>Streptophyta</taxon>
        <taxon>Embryophyta</taxon>
        <taxon>Tracheophyta</taxon>
        <taxon>Spermatophyta</taxon>
        <taxon>Magnoliopsida</taxon>
        <taxon>Liliopsida</taxon>
        <taxon>Poales</taxon>
        <taxon>Poaceae</taxon>
        <taxon>BOP clade</taxon>
        <taxon>Oryzoideae</taxon>
        <taxon>Oryzeae</taxon>
        <taxon>Oryzinae</taxon>
        <taxon>Oryza</taxon>
        <taxon>Oryza sativa</taxon>
    </lineage>
</organism>
<evidence type="ECO:0000250" key="1"/>
<evidence type="ECO:0000255" key="2">
    <source>
        <dbReference type="PROSITE-ProRule" id="PRU00366"/>
    </source>
</evidence>
<evidence type="ECO:0000256" key="3">
    <source>
        <dbReference type="SAM" id="MobiDB-lite"/>
    </source>
</evidence>
<evidence type="ECO:0000305" key="4"/>
<protein>
    <recommendedName>
        <fullName>Dehydration-responsive element-binding protein 2A</fullName>
        <shortName>Protein DREB2A</shortName>
    </recommendedName>
</protein>
<accession>A2WL19</accession>